<accession>Q5R8C7</accession>
<gene>
    <name type="primary">ILDR1</name>
</gene>
<keyword id="KW-0965">Cell junction</keyword>
<keyword id="KW-1003">Cell membrane</keyword>
<keyword id="KW-0963">Cytoplasm</keyword>
<keyword id="KW-1015">Disulfide bond</keyword>
<keyword id="KW-0393">Immunoglobulin domain</keyword>
<keyword id="KW-0472">Membrane</keyword>
<keyword id="KW-0539">Nucleus</keyword>
<keyword id="KW-0597">Phosphoprotein</keyword>
<keyword id="KW-0675">Receptor</keyword>
<keyword id="KW-1185">Reference proteome</keyword>
<keyword id="KW-0732">Signal</keyword>
<keyword id="KW-0796">Tight junction</keyword>
<keyword id="KW-0812">Transmembrane</keyword>
<keyword id="KW-1133">Transmembrane helix</keyword>
<comment type="function">
    <text evidence="3">Maintains epithelial barrier function by recruiting MARVELD2/tricellulin to tricellular tight junctions (tTJs). Crucial for normal hearing by maintaining the structural and functional integrity of tTJs, which are critical for the survival of auditory neurosensory HCs. Mediates fatty acids and lipoproteins-stimulated CCK/cholecystokinin secretion in the small intestine. In the inner ear, may regulate alternative pre-mRNA splicing via binding to TRA2A, TRA2B and SRSF1.</text>
</comment>
<comment type="subunit">
    <text evidence="2 3">Homooligomer (By similarity). Interacts with MARVELD2 and OCLN; the interaction is required to recruit MARVELD2 to tricellular contacts. Interacts (via C-terminus) with TRA2A, TRA2B and SRSF1 (By similarity). Interacts with PLSCR1 (By similarity).</text>
</comment>
<comment type="subcellular location">
    <subcellularLocation>
        <location evidence="3">Cell membrane</location>
        <topology evidence="4">Single-pass type I membrane protein</topology>
    </subcellularLocation>
    <subcellularLocation>
        <location evidence="3">Cell junction</location>
        <location evidence="3">Tight junction</location>
    </subcellularLocation>
    <subcellularLocation>
        <location evidence="3">Nucleus</location>
    </subcellularLocation>
    <subcellularLocation>
        <location evidence="2">Cytoplasm</location>
    </subcellularLocation>
    <text evidence="3">Localizes to tricellular tight junctions (tTJs) between epithelial cells.</text>
</comment>
<comment type="similarity">
    <text evidence="6">Belongs to the immunoglobulin superfamily. LISCH7 family.</text>
</comment>
<protein>
    <recommendedName>
        <fullName>Immunoglobulin-like domain-containing receptor 1</fullName>
    </recommendedName>
</protein>
<feature type="signal peptide" evidence="4">
    <location>
        <begin position="1"/>
        <end position="23"/>
    </location>
</feature>
<feature type="chain" id="PRO_0000245306" description="Immunoglobulin-like domain-containing receptor 1">
    <location>
        <begin position="24"/>
        <end position="546"/>
    </location>
</feature>
<feature type="topological domain" description="Extracellular" evidence="4">
    <location>
        <begin position="24"/>
        <end position="167"/>
    </location>
</feature>
<feature type="transmembrane region" description="Helical" evidence="4">
    <location>
        <begin position="168"/>
        <end position="188"/>
    </location>
</feature>
<feature type="topological domain" description="Cytoplasmic" evidence="4">
    <location>
        <begin position="189"/>
        <end position="546"/>
    </location>
</feature>
<feature type="domain" description="Ig-like V-type">
    <location>
        <begin position="24"/>
        <end position="162"/>
    </location>
</feature>
<feature type="region of interest" description="Disordered" evidence="5">
    <location>
        <begin position="399"/>
        <end position="546"/>
    </location>
</feature>
<feature type="compositionally biased region" description="Basic and acidic residues" evidence="5">
    <location>
        <begin position="442"/>
        <end position="457"/>
    </location>
</feature>
<feature type="compositionally biased region" description="Basic residues" evidence="5">
    <location>
        <begin position="458"/>
        <end position="467"/>
    </location>
</feature>
<feature type="compositionally biased region" description="Basic and acidic residues" evidence="5">
    <location>
        <begin position="527"/>
        <end position="539"/>
    </location>
</feature>
<feature type="modified residue" description="Phosphoserine" evidence="3">
    <location>
        <position position="499"/>
    </location>
</feature>
<feature type="modified residue" description="Phosphoserine" evidence="3">
    <location>
        <position position="501"/>
    </location>
</feature>
<feature type="disulfide bond" evidence="1">
    <location>
        <begin position="45"/>
        <end position="145"/>
    </location>
</feature>
<reference key="1">
    <citation type="submission" date="2004-11" db="EMBL/GenBank/DDBJ databases">
        <authorList>
            <consortium name="The German cDNA consortium"/>
        </authorList>
    </citation>
    <scope>NUCLEOTIDE SEQUENCE [LARGE SCALE MRNA]</scope>
    <source>
        <tissue>Kidney</tissue>
    </source>
</reference>
<dbReference type="EMBL" id="CR859826">
    <property type="protein sequence ID" value="CAH91983.1"/>
    <property type="molecule type" value="mRNA"/>
</dbReference>
<dbReference type="RefSeq" id="NP_001126151.1">
    <property type="nucleotide sequence ID" value="NM_001132679.1"/>
</dbReference>
<dbReference type="FunCoup" id="Q5R8C7">
    <property type="interactions" value="57"/>
</dbReference>
<dbReference type="STRING" id="9601.ENSPPYP00000015089"/>
<dbReference type="GeneID" id="100173110"/>
<dbReference type="KEGG" id="pon:100173110"/>
<dbReference type="CTD" id="286676"/>
<dbReference type="eggNOG" id="ENOG502QS11">
    <property type="taxonomic scope" value="Eukaryota"/>
</dbReference>
<dbReference type="InParanoid" id="Q5R8C7"/>
<dbReference type="OrthoDB" id="9944507at2759"/>
<dbReference type="Proteomes" id="UP000001595">
    <property type="component" value="Unplaced"/>
</dbReference>
<dbReference type="GO" id="GO:0005923">
    <property type="term" value="C:bicellular tight junction"/>
    <property type="evidence" value="ECO:0007669"/>
    <property type="project" value="UniProtKB-SubCell"/>
</dbReference>
<dbReference type="GO" id="GO:0005737">
    <property type="term" value="C:cytoplasm"/>
    <property type="evidence" value="ECO:0007669"/>
    <property type="project" value="UniProtKB-SubCell"/>
</dbReference>
<dbReference type="GO" id="GO:0005634">
    <property type="term" value="C:nucleus"/>
    <property type="evidence" value="ECO:0007669"/>
    <property type="project" value="UniProtKB-SubCell"/>
</dbReference>
<dbReference type="GO" id="GO:0005886">
    <property type="term" value="C:plasma membrane"/>
    <property type="evidence" value="ECO:0000250"/>
    <property type="project" value="UniProtKB"/>
</dbReference>
<dbReference type="GO" id="GO:0070160">
    <property type="term" value="C:tight junction"/>
    <property type="evidence" value="ECO:0000250"/>
    <property type="project" value="UniProtKB"/>
</dbReference>
<dbReference type="GO" id="GO:0061689">
    <property type="term" value="C:tricellular tight junction"/>
    <property type="evidence" value="ECO:0000250"/>
    <property type="project" value="UniProtKB"/>
</dbReference>
<dbReference type="GO" id="GO:0070506">
    <property type="term" value="F:high-density lipoprotein particle receptor activity"/>
    <property type="evidence" value="ECO:0000250"/>
    <property type="project" value="UniProtKB"/>
</dbReference>
<dbReference type="GO" id="GO:0010669">
    <property type="term" value="P:epithelial structure maintenance"/>
    <property type="evidence" value="ECO:0000250"/>
    <property type="project" value="UniProtKB"/>
</dbReference>
<dbReference type="GO" id="GO:0090277">
    <property type="term" value="P:positive regulation of peptide hormone secretion"/>
    <property type="evidence" value="ECO:0000250"/>
    <property type="project" value="UniProtKB"/>
</dbReference>
<dbReference type="GO" id="GO:0061833">
    <property type="term" value="P:protein localization to tricellular tight junction"/>
    <property type="evidence" value="ECO:0000250"/>
    <property type="project" value="UniProtKB"/>
</dbReference>
<dbReference type="GO" id="GO:0043484">
    <property type="term" value="P:regulation of RNA splicing"/>
    <property type="evidence" value="ECO:0000250"/>
    <property type="project" value="UniProtKB"/>
</dbReference>
<dbReference type="GO" id="GO:0070542">
    <property type="term" value="P:response to fatty acid"/>
    <property type="evidence" value="ECO:0000250"/>
    <property type="project" value="UniProtKB"/>
</dbReference>
<dbReference type="GO" id="GO:1904274">
    <property type="term" value="P:tricellular tight junction assembly"/>
    <property type="evidence" value="ECO:0000250"/>
    <property type="project" value="UniProtKB"/>
</dbReference>
<dbReference type="Gene3D" id="2.60.40.10">
    <property type="entry name" value="Immunoglobulins"/>
    <property type="match status" value="1"/>
</dbReference>
<dbReference type="InterPro" id="IPR036179">
    <property type="entry name" value="Ig-like_dom_sf"/>
</dbReference>
<dbReference type="InterPro" id="IPR051874">
    <property type="entry name" value="Ig-like_domain-LISCH7"/>
</dbReference>
<dbReference type="InterPro" id="IPR013783">
    <property type="entry name" value="Ig-like_fold"/>
</dbReference>
<dbReference type="InterPro" id="IPR003599">
    <property type="entry name" value="Ig_sub"/>
</dbReference>
<dbReference type="InterPro" id="IPR008664">
    <property type="entry name" value="LISCH7"/>
</dbReference>
<dbReference type="PANTHER" id="PTHR15923:SF3">
    <property type="entry name" value="IMMUNOGLOBULIN-LIKE DOMAIN-CONTAINING RECEPTOR 1"/>
    <property type="match status" value="1"/>
</dbReference>
<dbReference type="PANTHER" id="PTHR15923">
    <property type="entry name" value="TRANSMEMBRANE AND IMMUNOGLOBULIN DOMAIN-CONTAINING PROTEIN"/>
    <property type="match status" value="1"/>
</dbReference>
<dbReference type="Pfam" id="PF05624">
    <property type="entry name" value="LSR"/>
    <property type="match status" value="1"/>
</dbReference>
<dbReference type="SMART" id="SM00409">
    <property type="entry name" value="IG"/>
    <property type="match status" value="1"/>
</dbReference>
<dbReference type="SUPFAM" id="SSF48726">
    <property type="entry name" value="Immunoglobulin"/>
    <property type="match status" value="1"/>
</dbReference>
<evidence type="ECO:0000250" key="1"/>
<evidence type="ECO:0000250" key="2">
    <source>
        <dbReference type="UniProtKB" id="Q86SU0"/>
    </source>
</evidence>
<evidence type="ECO:0000250" key="3">
    <source>
        <dbReference type="UniProtKB" id="Q8CBR1"/>
    </source>
</evidence>
<evidence type="ECO:0000255" key="4"/>
<evidence type="ECO:0000256" key="5">
    <source>
        <dbReference type="SAM" id="MobiDB-lite"/>
    </source>
</evidence>
<evidence type="ECO:0000305" key="6"/>
<name>ILDR1_PONAB</name>
<proteinExistence type="evidence at transcript level"/>
<sequence length="546" mass="63066">MAWPKLPAPWLLLCTWLPAGCLSLLVTVQHTERYVTLFASIILKCDYTTSAQLQDVVVTWRFKSFCKDPIFDYYSASYQAALSLGQDPSNDCNDNQREVRIVAQRRGQNEPVLGVDYRQRKITIQNRADLVINEVMWWDHGVYYCTIEAPGDTSGDPDKEVKLIVLHWLTVIFIILGALLLLLLIGVCWCQCCPQYCCCYIRCPCCPARCCCPEEALARHRYMKQAQALGPQMMEKPLYWGADRSSQVSSYPMHPLLQRDLSLRSSLPQMPMTQTTNHPPIANGVLEYLEKELRNLNLAQPLPPDLKARFGHPCSMLSSLGSEVVERRFIHLPPLIRDLSSSRRTSDSLHQQWLTPIPSRPWDLREGRRQHHYPDFHQELQDRGPKSWALERRELDPSWSGRHRSSRLNGSPIHWSDRDSLSDVPSSIEARWQPSHPPFRSRCQERPRRPSPRESTQRHGRRRRHRSYSPPLPSGLSSWSSEEDKERQPQSWGAHRRRSHSPHWPEEKPPSYRSLDVTPGKNSRKKGSVERRSEKDSSHSGRSVVI</sequence>
<organism>
    <name type="scientific">Pongo abelii</name>
    <name type="common">Sumatran orangutan</name>
    <name type="synonym">Pongo pygmaeus abelii</name>
    <dbReference type="NCBI Taxonomy" id="9601"/>
    <lineage>
        <taxon>Eukaryota</taxon>
        <taxon>Metazoa</taxon>
        <taxon>Chordata</taxon>
        <taxon>Craniata</taxon>
        <taxon>Vertebrata</taxon>
        <taxon>Euteleostomi</taxon>
        <taxon>Mammalia</taxon>
        <taxon>Eutheria</taxon>
        <taxon>Euarchontoglires</taxon>
        <taxon>Primates</taxon>
        <taxon>Haplorrhini</taxon>
        <taxon>Catarrhini</taxon>
        <taxon>Hominidae</taxon>
        <taxon>Pongo</taxon>
    </lineage>
</organism>